<organism>
    <name type="scientific">Escherichia coli (strain UTI89 / UPEC)</name>
    <dbReference type="NCBI Taxonomy" id="364106"/>
    <lineage>
        <taxon>Bacteria</taxon>
        <taxon>Pseudomonadati</taxon>
        <taxon>Pseudomonadota</taxon>
        <taxon>Gammaproteobacteria</taxon>
        <taxon>Enterobacterales</taxon>
        <taxon>Enterobacteriaceae</taxon>
        <taxon>Escherichia</taxon>
    </lineage>
</organism>
<comment type="function">
    <text evidence="1">Hydrolyzes dipeptides containing N-terminal aspartate residues. May play a role in allowing the cell to use peptide aspartate to spare carbon otherwise required for the synthesis of the aspartate family of amino acids.</text>
</comment>
<comment type="catalytic activity">
    <reaction evidence="1">
        <text>Dipeptidase E catalyzes the hydrolysis of dipeptides Asp-|-Xaa. It does not act on peptides with N-terminal Glu, Asn or Gln, nor does it cleave isoaspartyl peptides.</text>
        <dbReference type="EC" id="3.4.13.21"/>
    </reaction>
</comment>
<comment type="subcellular location">
    <subcellularLocation>
        <location evidence="1">Cytoplasm</location>
    </subcellularLocation>
</comment>
<comment type="similarity">
    <text evidence="1">Belongs to the peptidase S51 family.</text>
</comment>
<reference key="1">
    <citation type="journal article" date="2006" name="Proc. Natl. Acad. Sci. U.S.A.">
        <title>Identification of genes subject to positive selection in uropathogenic strains of Escherichia coli: a comparative genomics approach.</title>
        <authorList>
            <person name="Chen S.L."/>
            <person name="Hung C.-S."/>
            <person name="Xu J."/>
            <person name="Reigstad C.S."/>
            <person name="Magrini V."/>
            <person name="Sabo A."/>
            <person name="Blasiar D."/>
            <person name="Bieri T."/>
            <person name="Meyer R.R."/>
            <person name="Ozersky P."/>
            <person name="Armstrong J.R."/>
            <person name="Fulton R.S."/>
            <person name="Latreille J.P."/>
            <person name="Spieth J."/>
            <person name="Hooton T.M."/>
            <person name="Mardis E.R."/>
            <person name="Hultgren S.J."/>
            <person name="Gordon J.I."/>
        </authorList>
    </citation>
    <scope>NUCLEOTIDE SEQUENCE [LARGE SCALE GENOMIC DNA]</scope>
    <source>
        <strain>UTI89 / UPEC</strain>
    </source>
</reference>
<feature type="chain" id="PRO_0000258592" description="Peptidase E">
    <location>
        <begin position="1"/>
        <end position="229"/>
    </location>
</feature>
<feature type="active site" description="Charge relay system" evidence="1">
    <location>
        <position position="120"/>
    </location>
</feature>
<feature type="active site" description="Charge relay system" evidence="1">
    <location>
        <position position="135"/>
    </location>
</feature>
<feature type="active site" description="Charge relay system" evidence="1">
    <location>
        <position position="157"/>
    </location>
</feature>
<sequence length="229" mass="24570">MELLLLSNSTLPGKAWLEHALPLIAEQLQGRRSAVFIPFAGVTQTWDDYTAKTAAVLAPLGVSVTGIHSVVDPVAAIENAEIVIVGGGNTFQLLKQCRERGLLAPITDVVKRGALYIGWSAGANLACPTIRTTNDMPIVDPQGFDALNLFPLQINPHFTNALPEGHKGETREQRIRELLVVAPELTIIGLPEGNWITVSKGHATLGGPNTTYVFKAGEEAVPLEAGHRF</sequence>
<keyword id="KW-0963">Cytoplasm</keyword>
<keyword id="KW-0224">Dipeptidase</keyword>
<keyword id="KW-0378">Hydrolase</keyword>
<keyword id="KW-0645">Protease</keyword>
<keyword id="KW-0720">Serine protease</keyword>
<protein>
    <recommendedName>
        <fullName evidence="1">Peptidase E</fullName>
        <ecNumber evidence="1">3.4.13.21</ecNumber>
    </recommendedName>
    <alternativeName>
        <fullName evidence="1">Alpha-aspartyl dipeptidase</fullName>
    </alternativeName>
    <alternativeName>
        <fullName evidence="1">Asp-specific dipeptidase</fullName>
    </alternativeName>
    <alternativeName>
        <fullName evidence="1">Dipeptidase E</fullName>
    </alternativeName>
</protein>
<gene>
    <name evidence="1" type="primary">pepE</name>
    <name type="ordered locus">UTI89_C4581</name>
</gene>
<evidence type="ECO:0000255" key="1">
    <source>
        <dbReference type="HAMAP-Rule" id="MF_00510"/>
    </source>
</evidence>
<accession>Q1R3S5</accession>
<dbReference type="EC" id="3.4.13.21" evidence="1"/>
<dbReference type="EMBL" id="CP000243">
    <property type="protein sequence ID" value="ABE09989.1"/>
    <property type="molecule type" value="Genomic_DNA"/>
</dbReference>
<dbReference type="RefSeq" id="WP_000421763.1">
    <property type="nucleotide sequence ID" value="NZ_CP064825.1"/>
</dbReference>
<dbReference type="SMR" id="Q1R3S5"/>
<dbReference type="MEROPS" id="S51.001"/>
<dbReference type="GeneID" id="93777874"/>
<dbReference type="KEGG" id="eci:UTI89_C4581"/>
<dbReference type="HOGENOM" id="CLU_071689_0_0_6"/>
<dbReference type="Proteomes" id="UP000001952">
    <property type="component" value="Chromosome"/>
</dbReference>
<dbReference type="GO" id="GO:0005737">
    <property type="term" value="C:cytoplasm"/>
    <property type="evidence" value="ECO:0007669"/>
    <property type="project" value="UniProtKB-SubCell"/>
</dbReference>
<dbReference type="GO" id="GO:0016805">
    <property type="term" value="F:dipeptidase activity"/>
    <property type="evidence" value="ECO:0007669"/>
    <property type="project" value="UniProtKB-UniRule"/>
</dbReference>
<dbReference type="GO" id="GO:0008236">
    <property type="term" value="F:serine-type peptidase activity"/>
    <property type="evidence" value="ECO:0007669"/>
    <property type="project" value="UniProtKB-KW"/>
</dbReference>
<dbReference type="GO" id="GO:0006508">
    <property type="term" value="P:proteolysis"/>
    <property type="evidence" value="ECO:0007669"/>
    <property type="project" value="UniProtKB-UniRule"/>
</dbReference>
<dbReference type="CDD" id="cd03146">
    <property type="entry name" value="GAT1_Peptidase_E"/>
    <property type="match status" value="1"/>
</dbReference>
<dbReference type="FunFam" id="3.40.50.880:FF:000007">
    <property type="entry name" value="Peptidase E"/>
    <property type="match status" value="1"/>
</dbReference>
<dbReference type="Gene3D" id="3.40.50.880">
    <property type="match status" value="1"/>
</dbReference>
<dbReference type="HAMAP" id="MF_00510">
    <property type="entry name" value="Peptidase_E"/>
    <property type="match status" value="1"/>
</dbReference>
<dbReference type="InterPro" id="IPR029062">
    <property type="entry name" value="Class_I_gatase-like"/>
</dbReference>
<dbReference type="InterPro" id="IPR005320">
    <property type="entry name" value="Peptidase_S51"/>
</dbReference>
<dbReference type="InterPro" id="IPR023172">
    <property type="entry name" value="Peptidase_S51_dipeptidase-E"/>
</dbReference>
<dbReference type="NCBIfam" id="NF003642">
    <property type="entry name" value="PRK05282.1"/>
    <property type="match status" value="1"/>
</dbReference>
<dbReference type="PANTHER" id="PTHR20842:SF0">
    <property type="entry name" value="ALPHA-ASPARTYL DIPEPTIDASE"/>
    <property type="match status" value="1"/>
</dbReference>
<dbReference type="PANTHER" id="PTHR20842">
    <property type="entry name" value="PROTEASE S51 ALPHA-ASPARTYL DIPEPTIDASE"/>
    <property type="match status" value="1"/>
</dbReference>
<dbReference type="Pfam" id="PF03575">
    <property type="entry name" value="Peptidase_S51"/>
    <property type="match status" value="1"/>
</dbReference>
<dbReference type="SUPFAM" id="SSF52317">
    <property type="entry name" value="Class I glutamine amidotransferase-like"/>
    <property type="match status" value="1"/>
</dbReference>
<proteinExistence type="inferred from homology"/>
<name>PEPE_ECOUT</name>